<name>FBSB_TRIEI</name>
<dbReference type="EC" id="3.1.3.11"/>
<dbReference type="EC" id="3.1.3.37"/>
<dbReference type="EMBL" id="CP000393">
    <property type="protein sequence ID" value="ABG50339.1"/>
    <property type="molecule type" value="Genomic_DNA"/>
</dbReference>
<dbReference type="RefSeq" id="WP_011610727.1">
    <property type="nucleotide sequence ID" value="NC_008312.1"/>
</dbReference>
<dbReference type="SMR" id="Q117I5"/>
<dbReference type="STRING" id="203124.Tery_0948"/>
<dbReference type="KEGG" id="ter:Tery_0948"/>
<dbReference type="eggNOG" id="COG1494">
    <property type="taxonomic scope" value="Bacteria"/>
</dbReference>
<dbReference type="HOGENOM" id="CLU_054938_0_0_3"/>
<dbReference type="OrthoDB" id="9779353at2"/>
<dbReference type="UniPathway" id="UPA00116"/>
<dbReference type="GO" id="GO:0005829">
    <property type="term" value="C:cytosol"/>
    <property type="evidence" value="ECO:0007669"/>
    <property type="project" value="TreeGrafter"/>
</dbReference>
<dbReference type="GO" id="GO:0042132">
    <property type="term" value="F:fructose 1,6-bisphosphate 1-phosphatase activity"/>
    <property type="evidence" value="ECO:0007669"/>
    <property type="project" value="UniProtKB-EC"/>
</dbReference>
<dbReference type="GO" id="GO:0046872">
    <property type="term" value="F:metal ion binding"/>
    <property type="evidence" value="ECO:0007669"/>
    <property type="project" value="UniProtKB-KW"/>
</dbReference>
<dbReference type="GO" id="GO:0050278">
    <property type="term" value="F:sedoheptulose-bisphosphatase activity"/>
    <property type="evidence" value="ECO:0007669"/>
    <property type="project" value="UniProtKB-EC"/>
</dbReference>
<dbReference type="GO" id="GO:0030388">
    <property type="term" value="P:fructose 1,6-bisphosphate metabolic process"/>
    <property type="evidence" value="ECO:0007669"/>
    <property type="project" value="TreeGrafter"/>
</dbReference>
<dbReference type="GO" id="GO:0006094">
    <property type="term" value="P:gluconeogenesis"/>
    <property type="evidence" value="ECO:0007669"/>
    <property type="project" value="InterPro"/>
</dbReference>
<dbReference type="GO" id="GO:0006071">
    <property type="term" value="P:glycerol metabolic process"/>
    <property type="evidence" value="ECO:0007669"/>
    <property type="project" value="InterPro"/>
</dbReference>
<dbReference type="GO" id="GO:0019253">
    <property type="term" value="P:reductive pentose-phosphate cycle"/>
    <property type="evidence" value="ECO:0007669"/>
    <property type="project" value="UniProtKB-UniPathway"/>
</dbReference>
<dbReference type="CDD" id="cd01516">
    <property type="entry name" value="FBPase_glpX"/>
    <property type="match status" value="1"/>
</dbReference>
<dbReference type="FunFam" id="3.40.190.90:FF:000001">
    <property type="entry name" value="Fructose-1,6-bisphosphatase"/>
    <property type="match status" value="1"/>
</dbReference>
<dbReference type="Gene3D" id="3.40.190.90">
    <property type="match status" value="1"/>
</dbReference>
<dbReference type="Gene3D" id="3.30.540.10">
    <property type="entry name" value="Fructose-1,6-Bisphosphatase, subunit A, domain 1"/>
    <property type="match status" value="1"/>
</dbReference>
<dbReference type="InterPro" id="IPR004464">
    <property type="entry name" value="FBPase_class-2/SBPase"/>
</dbReference>
<dbReference type="NCBIfam" id="TIGR00330">
    <property type="entry name" value="glpX"/>
    <property type="match status" value="1"/>
</dbReference>
<dbReference type="PANTHER" id="PTHR30447:SF0">
    <property type="entry name" value="FRUCTOSE-1,6-BISPHOSPHATASE 1 CLASS 2-RELATED"/>
    <property type="match status" value="1"/>
</dbReference>
<dbReference type="PANTHER" id="PTHR30447">
    <property type="entry name" value="FRUCTOSE-1,6-BISPHOSPHATASE CLASS 2"/>
    <property type="match status" value="1"/>
</dbReference>
<dbReference type="Pfam" id="PF03320">
    <property type="entry name" value="FBPase_glpX"/>
    <property type="match status" value="1"/>
</dbReference>
<dbReference type="PIRSF" id="PIRSF004532">
    <property type="entry name" value="GlpX"/>
    <property type="match status" value="1"/>
</dbReference>
<dbReference type="SUPFAM" id="SSF56655">
    <property type="entry name" value="Carbohydrate phosphatase"/>
    <property type="match status" value="1"/>
</dbReference>
<proteinExistence type="inferred from homology"/>
<gene>
    <name type="ordered locus">Tery_0948</name>
</gene>
<keyword id="KW-0113">Calvin cycle</keyword>
<keyword id="KW-0119">Carbohydrate metabolism</keyword>
<keyword id="KW-0378">Hydrolase</keyword>
<keyword id="KW-0464">Manganese</keyword>
<keyword id="KW-0479">Metal-binding</keyword>
<comment type="function">
    <text evidence="1">Catalyzes the hydrolysis of fructose 1,6-bisphosphate (Fru 1,6-P2) and sedoheptulose 1,7-bisphosphate (Sed 1,7-P2) to fructose 6-phosphate and sedoheptulose 7-phosphate, respectively.</text>
</comment>
<comment type="catalytic activity">
    <reaction>
        <text>beta-D-fructose 1,6-bisphosphate + H2O = beta-D-fructose 6-phosphate + phosphate</text>
        <dbReference type="Rhea" id="RHEA:11064"/>
        <dbReference type="ChEBI" id="CHEBI:15377"/>
        <dbReference type="ChEBI" id="CHEBI:32966"/>
        <dbReference type="ChEBI" id="CHEBI:43474"/>
        <dbReference type="ChEBI" id="CHEBI:57634"/>
        <dbReference type="EC" id="3.1.3.11"/>
    </reaction>
</comment>
<comment type="catalytic activity">
    <reaction>
        <text>D-sedoheptulose 1,7-bisphosphate + H2O = D-sedoheptulose 7-phosphate + phosphate</text>
        <dbReference type="Rhea" id="RHEA:17461"/>
        <dbReference type="ChEBI" id="CHEBI:15377"/>
        <dbReference type="ChEBI" id="CHEBI:43474"/>
        <dbReference type="ChEBI" id="CHEBI:57483"/>
        <dbReference type="ChEBI" id="CHEBI:58335"/>
        <dbReference type="EC" id="3.1.3.37"/>
    </reaction>
</comment>
<comment type="cofactor">
    <cofactor evidence="1">
        <name>Mn(2+)</name>
        <dbReference type="ChEBI" id="CHEBI:29035"/>
    </cofactor>
</comment>
<comment type="pathway">
    <text>Carbohydrate biosynthesis; Calvin cycle.</text>
</comment>
<comment type="subunit">
    <text evidence="1">Homotetramer.</text>
</comment>
<comment type="similarity">
    <text evidence="2">Belongs to the FBPase class 2 family.</text>
</comment>
<reference key="1">
    <citation type="journal article" date="2015" name="Proc. Natl. Acad. Sci. U.S.A.">
        <title>Trichodesmium genome maintains abundant, widespread noncoding DNA in situ, despite oligotrophic lifestyle.</title>
        <authorList>
            <person name="Walworth N."/>
            <person name="Pfreundt U."/>
            <person name="Nelson W.C."/>
            <person name="Mincer T."/>
            <person name="Heidelberg J.F."/>
            <person name="Fu F."/>
            <person name="Waterbury J.B."/>
            <person name="Glavina del Rio T."/>
            <person name="Goodwin L."/>
            <person name="Kyrpides N.C."/>
            <person name="Land M.L."/>
            <person name="Woyke T."/>
            <person name="Hutchins D.A."/>
            <person name="Hess W.R."/>
            <person name="Webb E.A."/>
        </authorList>
    </citation>
    <scope>NUCLEOTIDE SEQUENCE [LARGE SCALE GENOMIC DNA]</scope>
    <source>
        <strain>IMS101</strain>
    </source>
</reference>
<sequence>MDNVIGLEIIEVVEQAAIASARWMGKGEKNTADEVAVEAMRERMNKIHMRGRIVIGEGERDEAPMLYIGEEVGICTQPDAKKMCEVEQLIEIDIAVDPCEGTNLVAYGQNGSMAVLAISEKGGLLAAPDVYMKKLAAPAVAKNHVDINKSATENLKIISECMDRAVEELVVVVMDRPRHKQLISEIRQAGARVRLISDGDVSAAISCAFAGTNIHALMGIGAAPEGVISAAAMRALGGHFQGQLIYDPAIVKTGLIGESKEDNMKRLKDMGIEDPDKVYNAEELASGETVLFAACGITPGTLMEGVRFFPNGARTQSLVISSQSKTARFVDTVHMFGETKTLQLK</sequence>
<protein>
    <recommendedName>
        <fullName>D-fructose 1,6-bisphosphatase class 2/sedoheptulose 1,7-bisphosphatase</fullName>
        <shortName>FBPase class 2/SBPase</shortName>
        <ecNumber>3.1.3.11</ecNumber>
        <ecNumber>3.1.3.37</ecNumber>
    </recommendedName>
</protein>
<accession>Q117I5</accession>
<feature type="chain" id="PRO_0000342736" description="D-fructose 1,6-bisphosphatase class 2/sedoheptulose 1,7-bisphosphatase">
    <location>
        <begin position="1"/>
        <end position="345"/>
    </location>
</feature>
<feature type="binding site" evidence="1">
    <location>
        <position position="33"/>
    </location>
    <ligand>
        <name>Mn(2+)</name>
        <dbReference type="ChEBI" id="CHEBI:29035"/>
        <label>1</label>
    </ligand>
</feature>
<feature type="binding site" evidence="1">
    <location>
        <position position="57"/>
    </location>
    <ligand>
        <name>Mn(2+)</name>
        <dbReference type="ChEBI" id="CHEBI:29035"/>
        <label>1</label>
    </ligand>
</feature>
<feature type="binding site" evidence="1">
    <location>
        <position position="97"/>
    </location>
    <ligand>
        <name>Mn(2+)</name>
        <dbReference type="ChEBI" id="CHEBI:29035"/>
        <label>2</label>
    </ligand>
</feature>
<feature type="binding site" evidence="1">
    <location>
        <begin position="100"/>
        <end position="102"/>
    </location>
    <ligand>
        <name>substrate</name>
    </ligand>
</feature>
<feature type="binding site" evidence="1">
    <location>
        <position position="100"/>
    </location>
    <ligand>
        <name>Mn(2+)</name>
        <dbReference type="ChEBI" id="CHEBI:29035"/>
        <label>2</label>
    </ligand>
</feature>
<feature type="binding site" evidence="1">
    <location>
        <position position="131"/>
    </location>
    <ligand>
        <name>substrate</name>
    </ligand>
</feature>
<feature type="binding site" evidence="1">
    <location>
        <begin position="176"/>
        <end position="178"/>
    </location>
    <ligand>
        <name>substrate</name>
    </ligand>
</feature>
<feature type="binding site" evidence="1">
    <location>
        <begin position="198"/>
        <end position="200"/>
    </location>
    <ligand>
        <name>substrate</name>
    </ligand>
</feature>
<feature type="binding site" evidence="1">
    <location>
        <position position="225"/>
    </location>
    <ligand>
        <name>Mn(2+)</name>
        <dbReference type="ChEBI" id="CHEBI:29035"/>
        <label>2</label>
    </ligand>
</feature>
<evidence type="ECO:0000250" key="1"/>
<evidence type="ECO:0000305" key="2"/>
<organism>
    <name type="scientific">Trichodesmium erythraeum (strain IMS101)</name>
    <dbReference type="NCBI Taxonomy" id="203124"/>
    <lineage>
        <taxon>Bacteria</taxon>
        <taxon>Bacillati</taxon>
        <taxon>Cyanobacteriota</taxon>
        <taxon>Cyanophyceae</taxon>
        <taxon>Oscillatoriophycideae</taxon>
        <taxon>Oscillatoriales</taxon>
        <taxon>Microcoleaceae</taxon>
        <taxon>Trichodesmium</taxon>
    </lineage>
</organism>